<feature type="chain" id="PRO_0000329173" description="DNA-directed RNA polymerase subunit beta">
    <location>
        <begin position="1"/>
        <end position="1375"/>
    </location>
</feature>
<name>RPOB_COXBR</name>
<protein>
    <recommendedName>
        <fullName evidence="1">DNA-directed RNA polymerase subunit beta</fullName>
        <shortName evidence="1">RNAP subunit beta</shortName>
        <ecNumber evidence="1">2.7.7.6</ecNumber>
    </recommendedName>
    <alternativeName>
        <fullName evidence="1">RNA polymerase subunit beta</fullName>
    </alternativeName>
    <alternativeName>
        <fullName evidence="1">Transcriptase subunit beta</fullName>
    </alternativeName>
</protein>
<gene>
    <name evidence="1" type="primary">rpoB</name>
    <name type="ordered locus">COXBURSA331_A0328</name>
</gene>
<keyword id="KW-0240">DNA-directed RNA polymerase</keyword>
<keyword id="KW-0548">Nucleotidyltransferase</keyword>
<keyword id="KW-0804">Transcription</keyword>
<keyword id="KW-0808">Transferase</keyword>
<proteinExistence type="inferred from homology"/>
<reference key="1">
    <citation type="submission" date="2007-11" db="EMBL/GenBank/DDBJ databases">
        <title>Genome sequencing of phylogenetically and phenotypically diverse Coxiella burnetii isolates.</title>
        <authorList>
            <person name="Seshadri R."/>
            <person name="Samuel J.E."/>
        </authorList>
    </citation>
    <scope>NUCLEOTIDE SEQUENCE [LARGE SCALE GENOMIC DNA]</scope>
    <source>
        <strain>RSA 331 / Henzerling II</strain>
    </source>
</reference>
<sequence>MAQANSRSRNSATISYPEKRRARVNLGKREVEILKTPYLLETQIESYRKFLQKDIAAEKREDNGLHAAFKSVFPITSYSGYAVLEYVGYSLGGESTLFDVEECKLRGLTYAAPLKVNMRLVIYDKEAPAGKKAIKDIKEQEVYMGEIPLMTETGSLVINGTERVVVSQLHRSPGVFFEHDKGKTHSSGKLLYSARVIPYRGSWLDFEFDPKDCLFVRIDRRRKLPATVILRALGYDTEQILDMFYKTNHFHLNQETVTLDLIPQRLRGELAVVEIKDKKGKVIVEANRRISARHIRLIEKAEINKLELPDDYLYGKVIGKTIIDKETGEIIAHANEEITAELLKNLRATKTASLDTLYINEIECGPYVSDTLRLDTTTNQLEALVEIYRIMRPGEPPTKEAAESLFENLFFSPERYSLSAVGRMKFNRRVGRKELTGLDVLSKEDIVDVLRVLVDIRDGKGDVDDIDHLGNRRIRSVGEMAENQFRVGLVRVERAVKDRLSLADVENLMPQDLVNAKPVSAAIKEFFGSSQLSQFMDQNNPLSEITHKRRVSALGPGGLTRERAGFEVRDVHVTHYGRVCPIETPEGPNIGLINSLAVFARANEYGFLETPYRKVVDRVVTDETEYLSAIEEGDYYIAQANTNVDGKGRLVDDLISCRYKGEFTLTTPDKINYMDVSPRQIVSVAAALIPFLEHDDANRALMGSNMQRQAVPTIRPETPLVGTGMERTVAVDSGVTVIAKRSGVIDSVDASRIVVRVDRKETEDDDDIGVDIYNLTKFTRSNQNTCINQHPIVEVGDKVQKGDVLADGPSTDIGELALGQNLLVAFMPWNGYNFEDSILISERLVEEDRFTTIHIQEFTCVARDTKLGPEEITSDIPNVGESALAKLDESGIVHIGAEVNAGDILVGKVTPKGETQLTPEEKLLRAIFGEKASDVKDTSLRVTPGITGTVIDVRIFTREGIKKDERTLEIEKAELSKVEKDLNDELRVREDALFENLEKLLTGRVAAGGPNKLAKGTKITKSYLADLPRQKWFEIRLQDDAATKRLEASHEHFKELRETRDAKLKDSRQKLTQGGDLAPGVIKIVKVYLAVKRRIQPGDKMAGRHGNKGVISTIVPIEDMPYLEDGTPVDIVLNPLGVPSRMNIGQVLETHLGWAAKGLGKKIGEMIEKGADAKELRNSLKPIYDLSKTQRFDLEALEDPEIVTLAKNLRKGVPISSPVFDGATEEEIKQLLKMADLPTSGQAALYDGRTGKKFDRSVTVGYMYMLKLNHLVDDKMHARSTGSYSLVTQQPLGGKAQFGGQRFGEMEVWALEAYGAAYTLQEMLTVKSDDVAGRTRMYKNIVDGDHRMDAGMPESFNVLVKEIRSLAIDIGLEND</sequence>
<comment type="function">
    <text evidence="1">DNA-dependent RNA polymerase catalyzes the transcription of DNA into RNA using the four ribonucleoside triphosphates as substrates.</text>
</comment>
<comment type="catalytic activity">
    <reaction evidence="1">
        <text>RNA(n) + a ribonucleoside 5'-triphosphate = RNA(n+1) + diphosphate</text>
        <dbReference type="Rhea" id="RHEA:21248"/>
        <dbReference type="Rhea" id="RHEA-COMP:14527"/>
        <dbReference type="Rhea" id="RHEA-COMP:17342"/>
        <dbReference type="ChEBI" id="CHEBI:33019"/>
        <dbReference type="ChEBI" id="CHEBI:61557"/>
        <dbReference type="ChEBI" id="CHEBI:140395"/>
        <dbReference type="EC" id="2.7.7.6"/>
    </reaction>
</comment>
<comment type="subunit">
    <text evidence="1">The RNAP catalytic core consists of 2 alpha, 1 beta, 1 beta' and 1 omega subunit. When a sigma factor is associated with the core the holoenzyme is formed, which can initiate transcription.</text>
</comment>
<comment type="similarity">
    <text evidence="1">Belongs to the RNA polymerase beta chain family.</text>
</comment>
<dbReference type="EC" id="2.7.7.6" evidence="1"/>
<dbReference type="EMBL" id="CP000890">
    <property type="protein sequence ID" value="ABX78812.1"/>
    <property type="molecule type" value="Genomic_DNA"/>
</dbReference>
<dbReference type="SMR" id="A9NAL4"/>
<dbReference type="KEGG" id="cbs:COXBURSA331_A0328"/>
<dbReference type="HOGENOM" id="CLU_000524_4_0_6"/>
<dbReference type="GO" id="GO:0000428">
    <property type="term" value="C:DNA-directed RNA polymerase complex"/>
    <property type="evidence" value="ECO:0007669"/>
    <property type="project" value="UniProtKB-KW"/>
</dbReference>
<dbReference type="GO" id="GO:0003677">
    <property type="term" value="F:DNA binding"/>
    <property type="evidence" value="ECO:0007669"/>
    <property type="project" value="UniProtKB-UniRule"/>
</dbReference>
<dbReference type="GO" id="GO:0003899">
    <property type="term" value="F:DNA-directed RNA polymerase activity"/>
    <property type="evidence" value="ECO:0007669"/>
    <property type="project" value="UniProtKB-UniRule"/>
</dbReference>
<dbReference type="GO" id="GO:0032549">
    <property type="term" value="F:ribonucleoside binding"/>
    <property type="evidence" value="ECO:0007669"/>
    <property type="project" value="InterPro"/>
</dbReference>
<dbReference type="GO" id="GO:0006351">
    <property type="term" value="P:DNA-templated transcription"/>
    <property type="evidence" value="ECO:0007669"/>
    <property type="project" value="UniProtKB-UniRule"/>
</dbReference>
<dbReference type="CDD" id="cd00653">
    <property type="entry name" value="RNA_pol_B_RPB2"/>
    <property type="match status" value="1"/>
</dbReference>
<dbReference type="FunFam" id="2.40.50.100:FF:000006">
    <property type="entry name" value="DNA-directed RNA polymerase subunit beta"/>
    <property type="match status" value="1"/>
</dbReference>
<dbReference type="FunFam" id="3.90.1110.10:FF:000001">
    <property type="entry name" value="DNA-directed RNA polymerase subunit beta"/>
    <property type="match status" value="1"/>
</dbReference>
<dbReference type="FunFam" id="3.90.1800.10:FF:000001">
    <property type="entry name" value="DNA-directed RNA polymerase subunit beta"/>
    <property type="match status" value="1"/>
</dbReference>
<dbReference type="Gene3D" id="2.40.50.100">
    <property type="match status" value="1"/>
</dbReference>
<dbReference type="Gene3D" id="2.40.50.150">
    <property type="match status" value="1"/>
</dbReference>
<dbReference type="Gene3D" id="3.90.1100.10">
    <property type="match status" value="2"/>
</dbReference>
<dbReference type="Gene3D" id="2.30.150.10">
    <property type="entry name" value="DNA-directed RNA polymerase, beta subunit, external 1 domain"/>
    <property type="match status" value="1"/>
</dbReference>
<dbReference type="Gene3D" id="2.40.270.10">
    <property type="entry name" value="DNA-directed RNA polymerase, subunit 2, domain 6"/>
    <property type="match status" value="1"/>
</dbReference>
<dbReference type="Gene3D" id="3.90.1800.10">
    <property type="entry name" value="RNA polymerase alpha subunit dimerisation domain"/>
    <property type="match status" value="1"/>
</dbReference>
<dbReference type="Gene3D" id="3.90.1110.10">
    <property type="entry name" value="RNA polymerase Rpb2, domain 2"/>
    <property type="match status" value="1"/>
</dbReference>
<dbReference type="HAMAP" id="MF_01321">
    <property type="entry name" value="RNApol_bact_RpoB"/>
    <property type="match status" value="1"/>
</dbReference>
<dbReference type="InterPro" id="IPR042107">
    <property type="entry name" value="DNA-dir_RNA_pol_bsu_ext_1_sf"/>
</dbReference>
<dbReference type="InterPro" id="IPR019462">
    <property type="entry name" value="DNA-dir_RNA_pol_bsu_external_1"/>
</dbReference>
<dbReference type="InterPro" id="IPR015712">
    <property type="entry name" value="DNA-dir_RNA_pol_su2"/>
</dbReference>
<dbReference type="InterPro" id="IPR007120">
    <property type="entry name" value="DNA-dir_RNAP_su2_dom"/>
</dbReference>
<dbReference type="InterPro" id="IPR037033">
    <property type="entry name" value="DNA-dir_RNAP_su2_hyb_sf"/>
</dbReference>
<dbReference type="InterPro" id="IPR010243">
    <property type="entry name" value="RNA_pol_bsu_bac"/>
</dbReference>
<dbReference type="InterPro" id="IPR007121">
    <property type="entry name" value="RNA_pol_bsu_CS"/>
</dbReference>
<dbReference type="InterPro" id="IPR007644">
    <property type="entry name" value="RNA_pol_bsu_protrusion"/>
</dbReference>
<dbReference type="InterPro" id="IPR007642">
    <property type="entry name" value="RNA_pol_Rpb2_2"/>
</dbReference>
<dbReference type="InterPro" id="IPR037034">
    <property type="entry name" value="RNA_pol_Rpb2_2_sf"/>
</dbReference>
<dbReference type="InterPro" id="IPR007645">
    <property type="entry name" value="RNA_pol_Rpb2_3"/>
</dbReference>
<dbReference type="InterPro" id="IPR007641">
    <property type="entry name" value="RNA_pol_Rpb2_7"/>
</dbReference>
<dbReference type="InterPro" id="IPR014724">
    <property type="entry name" value="RNA_pol_RPB2_OB-fold"/>
</dbReference>
<dbReference type="NCBIfam" id="NF001616">
    <property type="entry name" value="PRK00405.1"/>
    <property type="match status" value="1"/>
</dbReference>
<dbReference type="NCBIfam" id="TIGR02013">
    <property type="entry name" value="rpoB"/>
    <property type="match status" value="1"/>
</dbReference>
<dbReference type="PANTHER" id="PTHR20856">
    <property type="entry name" value="DNA-DIRECTED RNA POLYMERASE I SUBUNIT 2"/>
    <property type="match status" value="1"/>
</dbReference>
<dbReference type="Pfam" id="PF04563">
    <property type="entry name" value="RNA_pol_Rpb2_1"/>
    <property type="match status" value="1"/>
</dbReference>
<dbReference type="Pfam" id="PF04561">
    <property type="entry name" value="RNA_pol_Rpb2_2"/>
    <property type="match status" value="2"/>
</dbReference>
<dbReference type="Pfam" id="PF04565">
    <property type="entry name" value="RNA_pol_Rpb2_3"/>
    <property type="match status" value="1"/>
</dbReference>
<dbReference type="Pfam" id="PF10385">
    <property type="entry name" value="RNA_pol_Rpb2_45"/>
    <property type="match status" value="1"/>
</dbReference>
<dbReference type="Pfam" id="PF00562">
    <property type="entry name" value="RNA_pol_Rpb2_6"/>
    <property type="match status" value="1"/>
</dbReference>
<dbReference type="Pfam" id="PF04560">
    <property type="entry name" value="RNA_pol_Rpb2_7"/>
    <property type="match status" value="1"/>
</dbReference>
<dbReference type="SUPFAM" id="SSF64484">
    <property type="entry name" value="beta and beta-prime subunits of DNA dependent RNA-polymerase"/>
    <property type="match status" value="1"/>
</dbReference>
<dbReference type="PROSITE" id="PS01166">
    <property type="entry name" value="RNA_POL_BETA"/>
    <property type="match status" value="1"/>
</dbReference>
<accession>A9NAL4</accession>
<organism>
    <name type="scientific">Coxiella burnetii (strain RSA 331 / Henzerling II)</name>
    <dbReference type="NCBI Taxonomy" id="360115"/>
    <lineage>
        <taxon>Bacteria</taxon>
        <taxon>Pseudomonadati</taxon>
        <taxon>Pseudomonadota</taxon>
        <taxon>Gammaproteobacteria</taxon>
        <taxon>Legionellales</taxon>
        <taxon>Coxiellaceae</taxon>
        <taxon>Coxiella</taxon>
    </lineage>
</organism>
<evidence type="ECO:0000255" key="1">
    <source>
        <dbReference type="HAMAP-Rule" id="MF_01321"/>
    </source>
</evidence>